<accession>B8ZK29</accession>
<organism>
    <name type="scientific">Streptococcus pneumoniae (strain ATCC 700669 / Spain 23F-1)</name>
    <dbReference type="NCBI Taxonomy" id="561276"/>
    <lineage>
        <taxon>Bacteria</taxon>
        <taxon>Bacillati</taxon>
        <taxon>Bacillota</taxon>
        <taxon>Bacilli</taxon>
        <taxon>Lactobacillales</taxon>
        <taxon>Streptococcaceae</taxon>
        <taxon>Streptococcus</taxon>
    </lineage>
</organism>
<sequence>MVRLNVKPTRMELNNLKERLTTAERGHKLLKDKRDELMRRFISLIRENNQLRKEVESYLIDNLKSFAVAKSLKNSQMVEELFSIPSKEIELFVEKENIMSVTVPRMHMNITSQNENSEYSYLSSNSEMDDVFATMNSLIYKLLRLAEVEKTCQLMADEIEKTRRRVNGLEYSIIPNLSETIHYIELKLEEAERANLVRIMKVK</sequence>
<name>VATD_STRPJ</name>
<keyword id="KW-0066">ATP synthesis</keyword>
<keyword id="KW-0375">Hydrogen ion transport</keyword>
<keyword id="KW-0406">Ion transport</keyword>
<keyword id="KW-0813">Transport</keyword>
<evidence type="ECO:0000255" key="1">
    <source>
        <dbReference type="HAMAP-Rule" id="MF_00271"/>
    </source>
</evidence>
<comment type="function">
    <text evidence="1">Produces ATP from ADP in the presence of a proton gradient across the membrane.</text>
</comment>
<comment type="similarity">
    <text evidence="1">Belongs to the V-ATPase D subunit family.</text>
</comment>
<gene>
    <name evidence="1" type="primary">atpD</name>
    <name type="ordered locus">SPN23F12070</name>
</gene>
<reference key="1">
    <citation type="journal article" date="2009" name="J. Bacteriol.">
        <title>Role of conjugative elements in the evolution of the multidrug-resistant pandemic clone Streptococcus pneumoniae Spain23F ST81.</title>
        <authorList>
            <person name="Croucher N.J."/>
            <person name="Walker D."/>
            <person name="Romero P."/>
            <person name="Lennard N."/>
            <person name="Paterson G.K."/>
            <person name="Bason N.C."/>
            <person name="Mitchell A.M."/>
            <person name="Quail M.A."/>
            <person name="Andrew P.W."/>
            <person name="Parkhill J."/>
            <person name="Bentley S.D."/>
            <person name="Mitchell T.J."/>
        </authorList>
    </citation>
    <scope>NUCLEOTIDE SEQUENCE [LARGE SCALE GENOMIC DNA]</scope>
    <source>
        <strain>ATCC 700669 / Spain 23F-1</strain>
    </source>
</reference>
<proteinExistence type="inferred from homology"/>
<protein>
    <recommendedName>
        <fullName evidence="1">V-type ATP synthase subunit D</fullName>
    </recommendedName>
    <alternativeName>
        <fullName evidence="1">V-ATPase subunit D</fullName>
    </alternativeName>
</protein>
<dbReference type="EMBL" id="FM211187">
    <property type="protein sequence ID" value="CAR69010.1"/>
    <property type="molecule type" value="Genomic_DNA"/>
</dbReference>
<dbReference type="RefSeq" id="WP_000251935.1">
    <property type="nucleotide sequence ID" value="NC_011900.1"/>
</dbReference>
<dbReference type="SMR" id="B8ZK29"/>
<dbReference type="KEGG" id="sne:SPN23F12070"/>
<dbReference type="HOGENOM" id="CLU_069688_2_1_9"/>
<dbReference type="GO" id="GO:0005524">
    <property type="term" value="F:ATP binding"/>
    <property type="evidence" value="ECO:0007669"/>
    <property type="project" value="UniProtKB-UniRule"/>
</dbReference>
<dbReference type="GO" id="GO:0046933">
    <property type="term" value="F:proton-transporting ATP synthase activity, rotational mechanism"/>
    <property type="evidence" value="ECO:0007669"/>
    <property type="project" value="UniProtKB-UniRule"/>
</dbReference>
<dbReference type="GO" id="GO:0046961">
    <property type="term" value="F:proton-transporting ATPase activity, rotational mechanism"/>
    <property type="evidence" value="ECO:0007669"/>
    <property type="project" value="InterPro"/>
</dbReference>
<dbReference type="GO" id="GO:0042777">
    <property type="term" value="P:proton motive force-driven plasma membrane ATP synthesis"/>
    <property type="evidence" value="ECO:0007669"/>
    <property type="project" value="UniProtKB-UniRule"/>
</dbReference>
<dbReference type="Gene3D" id="1.10.287.3240">
    <property type="match status" value="1"/>
</dbReference>
<dbReference type="HAMAP" id="MF_00271">
    <property type="entry name" value="ATP_synth_D_arch"/>
    <property type="match status" value="1"/>
</dbReference>
<dbReference type="InterPro" id="IPR002699">
    <property type="entry name" value="V_ATPase_D"/>
</dbReference>
<dbReference type="NCBIfam" id="NF001546">
    <property type="entry name" value="PRK00373.1-5"/>
    <property type="match status" value="1"/>
</dbReference>
<dbReference type="NCBIfam" id="TIGR00309">
    <property type="entry name" value="V_ATPase_subD"/>
    <property type="match status" value="1"/>
</dbReference>
<dbReference type="PANTHER" id="PTHR11671">
    <property type="entry name" value="V-TYPE ATP SYNTHASE SUBUNIT D"/>
    <property type="match status" value="1"/>
</dbReference>
<dbReference type="Pfam" id="PF01813">
    <property type="entry name" value="ATP-synt_D"/>
    <property type="match status" value="1"/>
</dbReference>
<feature type="chain" id="PRO_1000173515" description="V-type ATP synthase subunit D">
    <location>
        <begin position="1"/>
        <end position="203"/>
    </location>
</feature>